<accession>B1JZ77</accession>
<feature type="chain" id="PRO_1000140445" description="C4-dicarboxylate transport protein">
    <location>
        <begin position="1"/>
        <end position="430"/>
    </location>
</feature>
<feature type="transmembrane region" description="Helical" evidence="1">
    <location>
        <begin position="9"/>
        <end position="29"/>
    </location>
</feature>
<feature type="transmembrane region" description="Helical" evidence="1">
    <location>
        <begin position="45"/>
        <end position="65"/>
    </location>
</feature>
<feature type="transmembrane region" description="Helical" evidence="1">
    <location>
        <begin position="79"/>
        <end position="99"/>
    </location>
</feature>
<feature type="transmembrane region" description="Helical" evidence="1">
    <location>
        <begin position="149"/>
        <end position="169"/>
    </location>
</feature>
<feature type="transmembrane region" description="Helical" evidence="1">
    <location>
        <begin position="185"/>
        <end position="205"/>
    </location>
</feature>
<feature type="transmembrane region" description="Helical" evidence="1">
    <location>
        <begin position="223"/>
        <end position="243"/>
    </location>
</feature>
<feature type="transmembrane region" description="Helical" evidence="1">
    <location>
        <begin position="308"/>
        <end position="328"/>
    </location>
</feature>
<feature type="transmembrane region" description="Helical" evidence="1">
    <location>
        <begin position="356"/>
        <end position="376"/>
    </location>
</feature>
<proteinExistence type="inferred from homology"/>
<reference key="1">
    <citation type="submission" date="2008-02" db="EMBL/GenBank/DDBJ databases">
        <title>Complete sequence of chromosome 1 of Burkholderia cenocepacia MC0-3.</title>
        <authorList>
            <person name="Copeland A."/>
            <person name="Lucas S."/>
            <person name="Lapidus A."/>
            <person name="Barry K."/>
            <person name="Bruce D."/>
            <person name="Goodwin L."/>
            <person name="Glavina del Rio T."/>
            <person name="Dalin E."/>
            <person name="Tice H."/>
            <person name="Pitluck S."/>
            <person name="Chain P."/>
            <person name="Malfatti S."/>
            <person name="Shin M."/>
            <person name="Vergez L."/>
            <person name="Schmutz J."/>
            <person name="Larimer F."/>
            <person name="Land M."/>
            <person name="Hauser L."/>
            <person name="Kyrpides N."/>
            <person name="Mikhailova N."/>
            <person name="Tiedje J."/>
            <person name="Richardson P."/>
        </authorList>
    </citation>
    <scope>NUCLEOTIDE SEQUENCE [LARGE SCALE GENOMIC DNA]</scope>
    <source>
        <strain>MC0-3</strain>
    </source>
</reference>
<dbReference type="EMBL" id="CP000958">
    <property type="protein sequence ID" value="ACA92043.1"/>
    <property type="molecule type" value="Genomic_DNA"/>
</dbReference>
<dbReference type="RefSeq" id="WP_006477705.1">
    <property type="nucleotide sequence ID" value="NC_010508.1"/>
</dbReference>
<dbReference type="SMR" id="B1JZ77"/>
<dbReference type="GeneID" id="83049667"/>
<dbReference type="KEGG" id="bcm:Bcenmc03_2884"/>
<dbReference type="HOGENOM" id="CLU_019375_7_0_4"/>
<dbReference type="Proteomes" id="UP000002169">
    <property type="component" value="Chromosome 1"/>
</dbReference>
<dbReference type="GO" id="GO:0005886">
    <property type="term" value="C:plasma membrane"/>
    <property type="evidence" value="ECO:0007669"/>
    <property type="project" value="UniProtKB-SubCell"/>
</dbReference>
<dbReference type="GO" id="GO:0015138">
    <property type="term" value="F:fumarate transmembrane transporter activity"/>
    <property type="evidence" value="ECO:0007669"/>
    <property type="project" value="TreeGrafter"/>
</dbReference>
<dbReference type="GO" id="GO:0015366">
    <property type="term" value="F:malate:proton symporter activity"/>
    <property type="evidence" value="ECO:0007669"/>
    <property type="project" value="TreeGrafter"/>
</dbReference>
<dbReference type="GO" id="GO:0015141">
    <property type="term" value="F:succinate transmembrane transporter activity"/>
    <property type="evidence" value="ECO:0007669"/>
    <property type="project" value="TreeGrafter"/>
</dbReference>
<dbReference type="GO" id="GO:0070778">
    <property type="term" value="P:L-aspartate transmembrane transport"/>
    <property type="evidence" value="ECO:0007669"/>
    <property type="project" value="TreeGrafter"/>
</dbReference>
<dbReference type="FunFam" id="1.10.3860.10:FF:000001">
    <property type="entry name" value="C4-dicarboxylate transport protein"/>
    <property type="match status" value="1"/>
</dbReference>
<dbReference type="Gene3D" id="1.10.3860.10">
    <property type="entry name" value="Sodium:dicarboxylate symporter"/>
    <property type="match status" value="1"/>
</dbReference>
<dbReference type="HAMAP" id="MF_01300">
    <property type="entry name" value="C4_dicarb_transport"/>
    <property type="match status" value="1"/>
</dbReference>
<dbReference type="InterPro" id="IPR023954">
    <property type="entry name" value="C4_dicarb_transport"/>
</dbReference>
<dbReference type="InterPro" id="IPR001991">
    <property type="entry name" value="Na-dicarboxylate_symporter"/>
</dbReference>
<dbReference type="InterPro" id="IPR018107">
    <property type="entry name" value="Na-dicarboxylate_symporter_CS"/>
</dbReference>
<dbReference type="InterPro" id="IPR036458">
    <property type="entry name" value="Na:dicarbo_symporter_sf"/>
</dbReference>
<dbReference type="NCBIfam" id="NF002461">
    <property type="entry name" value="PRK01663.1"/>
    <property type="match status" value="1"/>
</dbReference>
<dbReference type="NCBIfam" id="NF009587">
    <property type="entry name" value="PRK13027.1"/>
    <property type="match status" value="1"/>
</dbReference>
<dbReference type="PANTHER" id="PTHR42865:SF1">
    <property type="entry name" value="AEROBIC C4-DICARBOXYLATE TRANSPORT PROTEIN"/>
    <property type="match status" value="1"/>
</dbReference>
<dbReference type="PANTHER" id="PTHR42865">
    <property type="entry name" value="PROTON/GLUTAMATE-ASPARTATE SYMPORTER"/>
    <property type="match status" value="1"/>
</dbReference>
<dbReference type="Pfam" id="PF00375">
    <property type="entry name" value="SDF"/>
    <property type="match status" value="1"/>
</dbReference>
<dbReference type="PRINTS" id="PR00173">
    <property type="entry name" value="EDTRNSPORT"/>
</dbReference>
<dbReference type="SUPFAM" id="SSF118215">
    <property type="entry name" value="Proton glutamate symport protein"/>
    <property type="match status" value="1"/>
</dbReference>
<dbReference type="PROSITE" id="PS00713">
    <property type="entry name" value="NA_DICARBOXYL_SYMP_1"/>
    <property type="match status" value="1"/>
</dbReference>
<dbReference type="PROSITE" id="PS00714">
    <property type="entry name" value="NA_DICARBOXYL_SYMP_2"/>
    <property type="match status" value="1"/>
</dbReference>
<gene>
    <name evidence="1" type="primary">dctA</name>
    <name type="ordered locus">Bcenmc03_2884</name>
</gene>
<organism>
    <name type="scientific">Burkholderia orbicola (strain MC0-3)</name>
    <dbReference type="NCBI Taxonomy" id="406425"/>
    <lineage>
        <taxon>Bacteria</taxon>
        <taxon>Pseudomonadati</taxon>
        <taxon>Pseudomonadota</taxon>
        <taxon>Betaproteobacteria</taxon>
        <taxon>Burkholderiales</taxon>
        <taxon>Burkholderiaceae</taxon>
        <taxon>Burkholderia</taxon>
        <taxon>Burkholderia cepacia complex</taxon>
        <taxon>Burkholderia orbicola</taxon>
    </lineage>
</organism>
<protein>
    <recommendedName>
        <fullName evidence="1">C4-dicarboxylate transport protein</fullName>
    </recommendedName>
</protein>
<evidence type="ECO:0000255" key="1">
    <source>
        <dbReference type="HAMAP-Rule" id="MF_01300"/>
    </source>
</evidence>
<comment type="function">
    <text evidence="1">Responsible for the transport of dicarboxylates such as succinate, fumarate, and malate from the periplasm across the membrane.</text>
</comment>
<comment type="subcellular location">
    <subcellularLocation>
        <location evidence="1">Cell inner membrane</location>
        <topology evidence="1">Multi-pass membrane protein</topology>
    </subcellularLocation>
</comment>
<comment type="similarity">
    <text evidence="1">Belongs to the dicarboxylate/amino acid:cation symporter (DAACS) (TC 2.A.23) family.</text>
</comment>
<sequence>MKKKPFYKVLYVQVIFAIIVGVILGHFYPSIATDMKPLGDGFIKLIKMVIGPIIFCTVVTGIAGMEDMKKVGRVGGKALLYFEIVSTFALLLGLAATHLLRPGVGFNIDPATLDGKAVASYAAKAHGQSTVDFLMHIIPNTMVDAFAQGEILQILLIALLFGSVLAHLGERGRVVTDFIDGLTRVLFGIVHIVTKLAPIGAFGAMAFTIGKYGVGSLVPLLKLIGTFYLTSVVFVLVVLGAIARFTGFSIIRFVSYIKEELLIVLGTSSSEAALPQLMEKLEKAGCSRSVVGLVVPTGYSFNLDGTNIYMTMAVLFIAQATNIELTWMQQLTLLAVAMLTSKGASGVTGAGFITLAATLAVVPTIPLSGMVLILGIDRFMSECRALTNIVGNGVATVVVSAWEKELDRNKLRQALKGGGEVAPTETTAGV</sequence>
<keyword id="KW-0997">Cell inner membrane</keyword>
<keyword id="KW-1003">Cell membrane</keyword>
<keyword id="KW-0472">Membrane</keyword>
<keyword id="KW-0769">Symport</keyword>
<keyword id="KW-0812">Transmembrane</keyword>
<keyword id="KW-1133">Transmembrane helix</keyword>
<keyword id="KW-0813">Transport</keyword>
<name>DCTA_BURO0</name>